<protein>
    <recommendedName>
        <fullName>Gene 19.3 protein</fullName>
    </recommendedName>
</protein>
<sequence>MVIPIRPLSPSLRKRTSGRFRQWSSRVTSGMVCLVRYSALCSLNTMQQLWKRFVLVV</sequence>
<gene>
    <name type="primary">19.3</name>
</gene>
<organismHost>
    <name type="scientific">Escherichia coli</name>
    <dbReference type="NCBI Taxonomy" id="562"/>
</organismHost>
<proteinExistence type="predicted"/>
<accession>P10304</accession>
<feature type="chain" id="PRO_0000106544" description="Gene 19.3 protein">
    <location>
        <begin position="1"/>
        <end position="57"/>
    </location>
</feature>
<organism>
    <name type="scientific">Enterobacteria phage T3</name>
    <name type="common">Bacteriophage T3</name>
    <dbReference type="NCBI Taxonomy" id="10759"/>
    <lineage>
        <taxon>Viruses</taxon>
        <taxon>Duplodnaviria</taxon>
        <taxon>Heunggongvirae</taxon>
        <taxon>Uroviricota</taxon>
        <taxon>Caudoviricetes</taxon>
        <taxon>Autographiviridae</taxon>
        <taxon>Studiervirinae</taxon>
        <taxon>Teetrevirus</taxon>
        <taxon>Teetrevirus T3</taxon>
    </lineage>
</organism>
<dbReference type="EMBL" id="M14784">
    <property type="protein sequence ID" value="AAA92530.1"/>
    <property type="molecule type" value="Genomic_DNA"/>
</dbReference>
<dbReference type="PIR" id="H23476">
    <property type="entry name" value="W9BPB3"/>
</dbReference>
<dbReference type="InterPro" id="IPR035178">
    <property type="entry name" value="DUF5466"/>
</dbReference>
<dbReference type="Pfam" id="PF17554">
    <property type="entry name" value="DUF5466"/>
    <property type="match status" value="1"/>
</dbReference>
<reference key="1">
    <citation type="journal article" date="1986" name="Virology">
        <title>Cloning and sequencing of the genetic right end of bacteriophage T3 DNA.</title>
        <authorList>
            <person name="Yamada M."/>
            <person name="Fujisawa H."/>
            <person name="Kato H."/>
            <person name="Hamada K."/>
            <person name="Minagawa T."/>
        </authorList>
    </citation>
    <scope>NUCLEOTIDE SEQUENCE [GENOMIC DNA]</scope>
</reference>
<reference key="2">
    <citation type="journal article" date="1986" name="Virology">
        <authorList>
            <person name="Yamada M."/>
            <person name="Fujisawa H."/>
            <person name="Kato H."/>
            <person name="Hamada K."/>
            <person name="Minagawa T."/>
        </authorList>
    </citation>
    <scope>ERRATUM OF PUBMED:3010556</scope>
</reference>
<name>V193_BPT3</name>